<feature type="chain" id="PRO_0000180312" description="3-oxoacyl-[acyl-carrier-protein] synthase 1">
    <location>
        <begin position="1"/>
        <end position="406"/>
    </location>
</feature>
<feature type="domain" description="Ketosynthase family 3 (KS3)" evidence="2">
    <location>
        <begin position="1"/>
        <end position="403"/>
    </location>
</feature>
<feature type="active site" description="For beta-ketoacyl synthase activity" evidence="2">
    <location>
        <position position="163"/>
    </location>
</feature>
<feature type="active site" description="For beta-ketoacyl synthase activity" evidence="2">
    <location>
        <position position="298"/>
    </location>
</feature>
<feature type="active site" description="For beta-ketoacyl synthase activity" evidence="2">
    <location>
        <position position="333"/>
    </location>
</feature>
<name>FABB_ECOL6</name>
<proteinExistence type="inferred from homology"/>
<evidence type="ECO:0000250" key="1">
    <source>
        <dbReference type="UniProtKB" id="P0A953"/>
    </source>
</evidence>
<evidence type="ECO:0000255" key="2">
    <source>
        <dbReference type="PROSITE-ProRule" id="PRU01348"/>
    </source>
</evidence>
<evidence type="ECO:0000305" key="3"/>
<organism>
    <name type="scientific">Escherichia coli O6:H1 (strain CFT073 / ATCC 700928 / UPEC)</name>
    <dbReference type="NCBI Taxonomy" id="199310"/>
    <lineage>
        <taxon>Bacteria</taxon>
        <taxon>Pseudomonadati</taxon>
        <taxon>Pseudomonadota</taxon>
        <taxon>Gammaproteobacteria</taxon>
        <taxon>Enterobacterales</taxon>
        <taxon>Enterobacteriaceae</taxon>
        <taxon>Escherichia</taxon>
    </lineage>
</organism>
<comment type="function">
    <text evidence="1">Involved in the type II fatty acid elongation cycle. Catalyzes the elongation of a wide range of acyl-ACP by the addition of two carbons from malonyl-ACP to an acyl acceptor. Can also use unsaturated fatty acids. Catalyzes a key reaction in unsaturated fatty acid (UFA) synthesis, the elongation of the cis-3-decenoyl-ACP produced by FabA.</text>
</comment>
<comment type="catalytic activity">
    <reaction evidence="1">
        <text>a fatty acyl-[ACP] + malonyl-[ACP] + H(+) = a 3-oxoacyl-[ACP] + holo-[ACP] + CO2</text>
        <dbReference type="Rhea" id="RHEA:22836"/>
        <dbReference type="Rhea" id="RHEA-COMP:9623"/>
        <dbReference type="Rhea" id="RHEA-COMP:9685"/>
        <dbReference type="Rhea" id="RHEA-COMP:9916"/>
        <dbReference type="Rhea" id="RHEA-COMP:14125"/>
        <dbReference type="ChEBI" id="CHEBI:15378"/>
        <dbReference type="ChEBI" id="CHEBI:16526"/>
        <dbReference type="ChEBI" id="CHEBI:64479"/>
        <dbReference type="ChEBI" id="CHEBI:78449"/>
        <dbReference type="ChEBI" id="CHEBI:78776"/>
        <dbReference type="ChEBI" id="CHEBI:138651"/>
        <dbReference type="EC" id="2.3.1.41"/>
    </reaction>
    <physiologicalReaction direction="left-to-right" evidence="1">
        <dbReference type="Rhea" id="RHEA:22837"/>
    </physiologicalReaction>
</comment>
<comment type="catalytic activity">
    <reaction evidence="1">
        <text>(3Z)-decenoyl-[ACP] + malonyl-[ACP] + H(+) = 3-oxo-(5Z)-dodecenoyl-[ACP] + holo-[ACP] + CO2</text>
        <dbReference type="Rhea" id="RHEA:54940"/>
        <dbReference type="Rhea" id="RHEA-COMP:9623"/>
        <dbReference type="Rhea" id="RHEA-COMP:9685"/>
        <dbReference type="Rhea" id="RHEA-COMP:9927"/>
        <dbReference type="Rhea" id="RHEA-COMP:14042"/>
        <dbReference type="ChEBI" id="CHEBI:15378"/>
        <dbReference type="ChEBI" id="CHEBI:16526"/>
        <dbReference type="ChEBI" id="CHEBI:64479"/>
        <dbReference type="ChEBI" id="CHEBI:78449"/>
        <dbReference type="ChEBI" id="CHEBI:78798"/>
        <dbReference type="ChEBI" id="CHEBI:138410"/>
    </reaction>
    <physiologicalReaction direction="left-to-right" evidence="1">
        <dbReference type="Rhea" id="RHEA:54941"/>
    </physiologicalReaction>
</comment>
<comment type="pathway">
    <text evidence="1">Lipid metabolism; fatty acid biosynthesis.</text>
</comment>
<comment type="subunit">
    <text evidence="1">Homodimer.</text>
</comment>
<comment type="subcellular location">
    <subcellularLocation>
        <location evidence="1">Cytoplasm</location>
    </subcellularLocation>
</comment>
<comment type="similarity">
    <text evidence="3">Belongs to the thiolase-like superfamily. Beta-ketoacyl-ACP synthases family.</text>
</comment>
<dbReference type="EC" id="2.3.1.41" evidence="1"/>
<dbReference type="EMBL" id="AE014075">
    <property type="protein sequence ID" value="AAN81319.1"/>
    <property type="molecule type" value="Genomic_DNA"/>
</dbReference>
<dbReference type="RefSeq" id="WP_000817178.1">
    <property type="nucleotide sequence ID" value="NZ_CP051263.1"/>
</dbReference>
<dbReference type="SMR" id="P0A954"/>
<dbReference type="STRING" id="199310.c2869"/>
<dbReference type="GeneID" id="75202594"/>
<dbReference type="KEGG" id="ecc:c2869"/>
<dbReference type="eggNOG" id="COG0304">
    <property type="taxonomic scope" value="Bacteria"/>
</dbReference>
<dbReference type="HOGENOM" id="CLU_000022_69_2_6"/>
<dbReference type="BioCyc" id="ECOL199310:C2869-MONOMER"/>
<dbReference type="UniPathway" id="UPA00094"/>
<dbReference type="Proteomes" id="UP000001410">
    <property type="component" value="Chromosome"/>
</dbReference>
<dbReference type="GO" id="GO:0005829">
    <property type="term" value="C:cytosol"/>
    <property type="evidence" value="ECO:0007669"/>
    <property type="project" value="TreeGrafter"/>
</dbReference>
<dbReference type="GO" id="GO:0004315">
    <property type="term" value="F:3-oxoacyl-[acyl-carrier-protein] synthase activity"/>
    <property type="evidence" value="ECO:0007669"/>
    <property type="project" value="UniProtKB-EC"/>
</dbReference>
<dbReference type="GO" id="GO:0006633">
    <property type="term" value="P:fatty acid biosynthetic process"/>
    <property type="evidence" value="ECO:0007669"/>
    <property type="project" value="UniProtKB-UniPathway"/>
</dbReference>
<dbReference type="CDD" id="cd00834">
    <property type="entry name" value="KAS_I_II"/>
    <property type="match status" value="1"/>
</dbReference>
<dbReference type="FunFam" id="3.40.47.10:FF:000005">
    <property type="entry name" value="3-oxoacyl-[acyl-carrier-protein] synthase I"/>
    <property type="match status" value="1"/>
</dbReference>
<dbReference type="FunFam" id="3.40.47.10:FF:000006">
    <property type="entry name" value="3-oxoacyl-[acyl-carrier-protein] synthase I"/>
    <property type="match status" value="1"/>
</dbReference>
<dbReference type="Gene3D" id="3.40.47.10">
    <property type="match status" value="2"/>
</dbReference>
<dbReference type="InterPro" id="IPR000794">
    <property type="entry name" value="Beta-ketoacyl_synthase"/>
</dbReference>
<dbReference type="InterPro" id="IPR018201">
    <property type="entry name" value="Ketoacyl_synth_AS"/>
</dbReference>
<dbReference type="InterPro" id="IPR014031">
    <property type="entry name" value="Ketoacyl_synth_C"/>
</dbReference>
<dbReference type="InterPro" id="IPR014030">
    <property type="entry name" value="Ketoacyl_synth_N"/>
</dbReference>
<dbReference type="InterPro" id="IPR020841">
    <property type="entry name" value="PKS_Beta-ketoAc_synthase_dom"/>
</dbReference>
<dbReference type="InterPro" id="IPR016039">
    <property type="entry name" value="Thiolase-like"/>
</dbReference>
<dbReference type="NCBIfam" id="NF005935">
    <property type="entry name" value="PRK07967.1"/>
    <property type="match status" value="1"/>
</dbReference>
<dbReference type="PANTHER" id="PTHR11712:SF306">
    <property type="entry name" value="3-OXOACYL-[ACYL-CARRIER-PROTEIN] SYNTHASE 1"/>
    <property type="match status" value="1"/>
</dbReference>
<dbReference type="PANTHER" id="PTHR11712">
    <property type="entry name" value="POLYKETIDE SYNTHASE-RELATED"/>
    <property type="match status" value="1"/>
</dbReference>
<dbReference type="Pfam" id="PF00109">
    <property type="entry name" value="ketoacyl-synt"/>
    <property type="match status" value="1"/>
</dbReference>
<dbReference type="Pfam" id="PF02801">
    <property type="entry name" value="Ketoacyl-synt_C"/>
    <property type="match status" value="1"/>
</dbReference>
<dbReference type="SMART" id="SM00825">
    <property type="entry name" value="PKS_KS"/>
    <property type="match status" value="1"/>
</dbReference>
<dbReference type="SUPFAM" id="SSF53901">
    <property type="entry name" value="Thiolase-like"/>
    <property type="match status" value="2"/>
</dbReference>
<dbReference type="PROSITE" id="PS00606">
    <property type="entry name" value="KS3_1"/>
    <property type="match status" value="1"/>
</dbReference>
<dbReference type="PROSITE" id="PS52004">
    <property type="entry name" value="KS3_2"/>
    <property type="match status" value="1"/>
</dbReference>
<reference key="1">
    <citation type="journal article" date="2002" name="Proc. Natl. Acad. Sci. U.S.A.">
        <title>Extensive mosaic structure revealed by the complete genome sequence of uropathogenic Escherichia coli.</title>
        <authorList>
            <person name="Welch R.A."/>
            <person name="Burland V."/>
            <person name="Plunkett G. III"/>
            <person name="Redford P."/>
            <person name="Roesch P."/>
            <person name="Rasko D."/>
            <person name="Buckles E.L."/>
            <person name="Liou S.-R."/>
            <person name="Boutin A."/>
            <person name="Hackett J."/>
            <person name="Stroud D."/>
            <person name="Mayhew G.F."/>
            <person name="Rose D.J."/>
            <person name="Zhou S."/>
            <person name="Schwartz D.C."/>
            <person name="Perna N.T."/>
            <person name="Mobley H.L.T."/>
            <person name="Donnenberg M.S."/>
            <person name="Blattner F.R."/>
        </authorList>
    </citation>
    <scope>NUCLEOTIDE SEQUENCE [LARGE SCALE GENOMIC DNA]</scope>
    <source>
        <strain>CFT073 / ATCC 700928 / UPEC</strain>
    </source>
</reference>
<gene>
    <name type="primary">fabB</name>
    <name type="ordered locus">c2869</name>
</gene>
<sequence>MKRAVITGLGIVSSIGNNQQEVLASLREGRSGITFSQELKDSGMRSHVWGNVKLDTTGLIDRKVVRFMSDASIYAFLSMEQAIADAGLSPEAYQNNPRVGLIAGSGGGSPRFQVFGADAMRGPRGLKAVGPYVVTKAMASGVSACLATPFKIHGVNYSISSACATSAHCIGNAVEQIQLGKQDIVFAGGGEELCWEMACEFDAMGALSTKYNDTPEKASRTYDAHRDGFVIAGGGGMVVVEELEHALARGAHIYAEIVGYGATSDGADMVAPSGEGAVRCMKMAMHGVDTPIDYLNSHGTSTPVGDVKELAAIREVFGDKSPAISATKAMTGHSLGAAGVQEAIYSLLMLEHGFIAPSINIEELDEQAAGLNIVTETTDRELTTVMSNSFGFGGTNATLVMRKLKD</sequence>
<keyword id="KW-0012">Acyltransferase</keyword>
<keyword id="KW-0963">Cytoplasm</keyword>
<keyword id="KW-0275">Fatty acid biosynthesis</keyword>
<keyword id="KW-0276">Fatty acid metabolism</keyword>
<keyword id="KW-0444">Lipid biosynthesis</keyword>
<keyword id="KW-0443">Lipid metabolism</keyword>
<keyword id="KW-1185">Reference proteome</keyword>
<keyword id="KW-0808">Transferase</keyword>
<protein>
    <recommendedName>
        <fullName evidence="1">3-oxoacyl-[acyl-carrier-protein] synthase 1</fullName>
        <ecNumber evidence="1">2.3.1.41</ecNumber>
    </recommendedName>
    <alternativeName>
        <fullName evidence="1">3-oxoacyl-[acyl-carrier-protein] synthase I</fullName>
    </alternativeName>
    <alternativeName>
        <fullName evidence="1">Beta-ketoacyl-ACP synthase I</fullName>
        <shortName evidence="1">KAS I</shortName>
    </alternativeName>
</protein>
<accession>P0A954</accession>
<accession>P14926</accession>
<accession>Q9R828</accession>
<accession>Q9R829</accession>
<accession>Q9R830</accession>